<feature type="chain" id="PRO_0000052803" description="Hemoglobin subunit alpha-A">
    <location>
        <begin position="1"/>
        <end position="141"/>
    </location>
</feature>
<feature type="domain" description="Globin" evidence="1">
    <location>
        <begin position="1"/>
        <end position="141"/>
    </location>
</feature>
<feature type="binding site" evidence="1">
    <location>
        <position position="58"/>
    </location>
    <ligand>
        <name>O2</name>
        <dbReference type="ChEBI" id="CHEBI:15379"/>
    </ligand>
</feature>
<feature type="binding site" description="proximal binding residue" evidence="1">
    <location>
        <position position="87"/>
    </location>
    <ligand>
        <name>heme b</name>
        <dbReference type="ChEBI" id="CHEBI:60344"/>
    </ligand>
    <ligandPart>
        <name>Fe</name>
        <dbReference type="ChEBI" id="CHEBI:18248"/>
    </ligandPart>
</feature>
<dbReference type="PIR" id="A24692">
    <property type="entry name" value="A24692"/>
</dbReference>
<dbReference type="SMR" id="P07404"/>
<dbReference type="GO" id="GO:0072562">
    <property type="term" value="C:blood microparticle"/>
    <property type="evidence" value="ECO:0007669"/>
    <property type="project" value="TreeGrafter"/>
</dbReference>
<dbReference type="GO" id="GO:0031838">
    <property type="term" value="C:haptoglobin-hemoglobin complex"/>
    <property type="evidence" value="ECO:0007669"/>
    <property type="project" value="TreeGrafter"/>
</dbReference>
<dbReference type="GO" id="GO:0005833">
    <property type="term" value="C:hemoglobin complex"/>
    <property type="evidence" value="ECO:0007669"/>
    <property type="project" value="InterPro"/>
</dbReference>
<dbReference type="GO" id="GO:0031720">
    <property type="term" value="F:haptoglobin binding"/>
    <property type="evidence" value="ECO:0007669"/>
    <property type="project" value="TreeGrafter"/>
</dbReference>
<dbReference type="GO" id="GO:0020037">
    <property type="term" value="F:heme binding"/>
    <property type="evidence" value="ECO:0007669"/>
    <property type="project" value="InterPro"/>
</dbReference>
<dbReference type="GO" id="GO:0005506">
    <property type="term" value="F:iron ion binding"/>
    <property type="evidence" value="ECO:0007669"/>
    <property type="project" value="InterPro"/>
</dbReference>
<dbReference type="GO" id="GO:0043177">
    <property type="term" value="F:organic acid binding"/>
    <property type="evidence" value="ECO:0007669"/>
    <property type="project" value="TreeGrafter"/>
</dbReference>
<dbReference type="GO" id="GO:0019825">
    <property type="term" value="F:oxygen binding"/>
    <property type="evidence" value="ECO:0007669"/>
    <property type="project" value="InterPro"/>
</dbReference>
<dbReference type="GO" id="GO:0005344">
    <property type="term" value="F:oxygen carrier activity"/>
    <property type="evidence" value="ECO:0007669"/>
    <property type="project" value="UniProtKB-KW"/>
</dbReference>
<dbReference type="GO" id="GO:0004601">
    <property type="term" value="F:peroxidase activity"/>
    <property type="evidence" value="ECO:0007669"/>
    <property type="project" value="TreeGrafter"/>
</dbReference>
<dbReference type="GO" id="GO:0042744">
    <property type="term" value="P:hydrogen peroxide catabolic process"/>
    <property type="evidence" value="ECO:0007669"/>
    <property type="project" value="TreeGrafter"/>
</dbReference>
<dbReference type="CDD" id="cd08927">
    <property type="entry name" value="Hb-alpha-like"/>
    <property type="match status" value="1"/>
</dbReference>
<dbReference type="FunFam" id="1.10.490.10:FF:000002">
    <property type="entry name" value="Hemoglobin subunit alpha"/>
    <property type="match status" value="1"/>
</dbReference>
<dbReference type="Gene3D" id="1.10.490.10">
    <property type="entry name" value="Globins"/>
    <property type="match status" value="1"/>
</dbReference>
<dbReference type="InterPro" id="IPR000971">
    <property type="entry name" value="Globin"/>
</dbReference>
<dbReference type="InterPro" id="IPR009050">
    <property type="entry name" value="Globin-like_sf"/>
</dbReference>
<dbReference type="InterPro" id="IPR012292">
    <property type="entry name" value="Globin/Proto"/>
</dbReference>
<dbReference type="InterPro" id="IPR002338">
    <property type="entry name" value="Hemoglobin_a-typ"/>
</dbReference>
<dbReference type="InterPro" id="IPR050056">
    <property type="entry name" value="Hemoglobin_oxygen_transport"/>
</dbReference>
<dbReference type="InterPro" id="IPR002339">
    <property type="entry name" value="Hemoglobin_pi"/>
</dbReference>
<dbReference type="PANTHER" id="PTHR11442">
    <property type="entry name" value="HEMOGLOBIN FAMILY MEMBER"/>
    <property type="match status" value="1"/>
</dbReference>
<dbReference type="PANTHER" id="PTHR11442:SF48">
    <property type="entry name" value="HEMOGLOBIN SUBUNIT ALPHA"/>
    <property type="match status" value="1"/>
</dbReference>
<dbReference type="Pfam" id="PF00042">
    <property type="entry name" value="Globin"/>
    <property type="match status" value="1"/>
</dbReference>
<dbReference type="PRINTS" id="PR00612">
    <property type="entry name" value="ALPHAHAEM"/>
</dbReference>
<dbReference type="PRINTS" id="PR00815">
    <property type="entry name" value="PIHAEM"/>
</dbReference>
<dbReference type="SUPFAM" id="SSF46458">
    <property type="entry name" value="Globin-like"/>
    <property type="match status" value="1"/>
</dbReference>
<dbReference type="PROSITE" id="PS01033">
    <property type="entry name" value="GLOBIN"/>
    <property type="match status" value="1"/>
</dbReference>
<name>HBA_VULGR</name>
<comment type="function">
    <text>Involved in oxygen transport from the lung to the various peripheral tissues.</text>
</comment>
<comment type="subunit">
    <text>Heterotetramer of two alpha chains and two beta chains.</text>
</comment>
<comment type="tissue specificity">
    <text>Red blood cells.</text>
</comment>
<comment type="similarity">
    <text evidence="1">Belongs to the globin family.</text>
</comment>
<sequence>VLSGSDKTNVKGVFAKIGGHAEDYGAETLERMFITYPQTKTYFPHFDLQHGSAQIKGHGKKVVGALIEAANHIDDIAASLSKLSDLHAQKLRVDPVNFKLLGQCFLVVVAIHHPSVLTPEVHASLDKFLCAVGNVLTAKYR</sequence>
<accession>P07404</accession>
<protein>
    <recommendedName>
        <fullName>Hemoglobin subunit alpha-A</fullName>
    </recommendedName>
    <alternativeName>
        <fullName>Alpha-A-globin</fullName>
    </alternativeName>
    <alternativeName>
        <fullName>Hemoglobin alpha-A chain</fullName>
    </alternativeName>
</protein>
<reference key="1">
    <citation type="journal article" date="1985" name="Biol. Chem. Hoppe-Seyler">
        <title>The hemoglobin of adult Andean condors (Vultur gryphus, Cathartiformes). The amino acid sequence of the major (HbA) and minor component (HbD).</title>
        <authorList>
            <person name="Bauer H."/>
            <person name="Braunitzer G."/>
            <person name="Oberthur W."/>
            <person name="Kosters J."/>
            <person name="Grimm F."/>
        </authorList>
    </citation>
    <scope>PROTEIN SEQUENCE</scope>
</reference>
<proteinExistence type="evidence at protein level"/>
<evidence type="ECO:0000255" key="1">
    <source>
        <dbReference type="PROSITE-ProRule" id="PRU00238"/>
    </source>
</evidence>
<organism>
    <name type="scientific">Vultur gryphus</name>
    <name type="common">Andean condor</name>
    <dbReference type="NCBI Taxonomy" id="8924"/>
    <lineage>
        <taxon>Eukaryota</taxon>
        <taxon>Metazoa</taxon>
        <taxon>Chordata</taxon>
        <taxon>Craniata</taxon>
        <taxon>Vertebrata</taxon>
        <taxon>Euteleostomi</taxon>
        <taxon>Archelosauria</taxon>
        <taxon>Archosauria</taxon>
        <taxon>Dinosauria</taxon>
        <taxon>Saurischia</taxon>
        <taxon>Theropoda</taxon>
        <taxon>Coelurosauria</taxon>
        <taxon>Aves</taxon>
        <taxon>Neognathae</taxon>
        <taxon>Neoaves</taxon>
        <taxon>Telluraves</taxon>
        <taxon>Accipitrimorphae</taxon>
        <taxon>Accipitriformes</taxon>
        <taxon>Cathartidae</taxon>
        <taxon>Vultur</taxon>
    </lineage>
</organism>
<gene>
    <name type="primary">HBAA</name>
</gene>
<keyword id="KW-0903">Direct protein sequencing</keyword>
<keyword id="KW-0349">Heme</keyword>
<keyword id="KW-0408">Iron</keyword>
<keyword id="KW-0479">Metal-binding</keyword>
<keyword id="KW-0561">Oxygen transport</keyword>
<keyword id="KW-0813">Transport</keyword>